<dbReference type="EMBL" id="AE016826">
    <property type="protein sequence ID" value="AAO27061.1"/>
    <property type="molecule type" value="Genomic_DNA"/>
</dbReference>
<dbReference type="RefSeq" id="WP_011091462.1">
    <property type="nucleotide sequence ID" value="NC_004545.1"/>
</dbReference>
<dbReference type="SMR" id="Q89AF5"/>
<dbReference type="STRING" id="224915.bbp_340"/>
<dbReference type="KEGG" id="bab:bbp_340"/>
<dbReference type="eggNOG" id="COG0532">
    <property type="taxonomic scope" value="Bacteria"/>
</dbReference>
<dbReference type="HOGENOM" id="CLU_006301_6_3_6"/>
<dbReference type="OrthoDB" id="9811804at2"/>
<dbReference type="Proteomes" id="UP000000601">
    <property type="component" value="Chromosome"/>
</dbReference>
<dbReference type="GO" id="GO:0005829">
    <property type="term" value="C:cytosol"/>
    <property type="evidence" value="ECO:0007669"/>
    <property type="project" value="TreeGrafter"/>
</dbReference>
<dbReference type="GO" id="GO:0005525">
    <property type="term" value="F:GTP binding"/>
    <property type="evidence" value="ECO:0007669"/>
    <property type="project" value="UniProtKB-KW"/>
</dbReference>
<dbReference type="GO" id="GO:0003924">
    <property type="term" value="F:GTPase activity"/>
    <property type="evidence" value="ECO:0007669"/>
    <property type="project" value="UniProtKB-UniRule"/>
</dbReference>
<dbReference type="GO" id="GO:0097216">
    <property type="term" value="F:guanosine tetraphosphate binding"/>
    <property type="evidence" value="ECO:0007669"/>
    <property type="project" value="UniProtKB-ARBA"/>
</dbReference>
<dbReference type="GO" id="GO:0003743">
    <property type="term" value="F:translation initiation factor activity"/>
    <property type="evidence" value="ECO:0007669"/>
    <property type="project" value="UniProtKB-UniRule"/>
</dbReference>
<dbReference type="CDD" id="cd01887">
    <property type="entry name" value="IF2_eIF5B"/>
    <property type="match status" value="1"/>
</dbReference>
<dbReference type="CDD" id="cd03702">
    <property type="entry name" value="IF2_mtIF2_II"/>
    <property type="match status" value="1"/>
</dbReference>
<dbReference type="CDD" id="cd03692">
    <property type="entry name" value="mtIF2_IVc"/>
    <property type="match status" value="1"/>
</dbReference>
<dbReference type="FunFam" id="2.40.30.10:FF:000007">
    <property type="entry name" value="Translation initiation factor IF-2"/>
    <property type="match status" value="1"/>
</dbReference>
<dbReference type="FunFam" id="2.40.30.10:FF:000008">
    <property type="entry name" value="Translation initiation factor IF-2"/>
    <property type="match status" value="1"/>
</dbReference>
<dbReference type="FunFam" id="3.40.50.10050:FF:000001">
    <property type="entry name" value="Translation initiation factor IF-2"/>
    <property type="match status" value="1"/>
</dbReference>
<dbReference type="FunFam" id="3.40.50.300:FF:000019">
    <property type="entry name" value="Translation initiation factor IF-2"/>
    <property type="match status" value="1"/>
</dbReference>
<dbReference type="Gene3D" id="3.40.50.300">
    <property type="entry name" value="P-loop containing nucleotide triphosphate hydrolases"/>
    <property type="match status" value="1"/>
</dbReference>
<dbReference type="Gene3D" id="3.30.56.50">
    <property type="entry name" value="Putative DNA-binding domain, N-terminal subdomain of bacterial translation initiation factor IF2"/>
    <property type="match status" value="1"/>
</dbReference>
<dbReference type="Gene3D" id="2.40.30.10">
    <property type="entry name" value="Translation factors"/>
    <property type="match status" value="2"/>
</dbReference>
<dbReference type="Gene3D" id="3.40.50.10050">
    <property type="entry name" value="Translation initiation factor IF- 2, domain 3"/>
    <property type="match status" value="1"/>
</dbReference>
<dbReference type="HAMAP" id="MF_00100_B">
    <property type="entry name" value="IF_2_B"/>
    <property type="match status" value="1"/>
</dbReference>
<dbReference type="InterPro" id="IPR009061">
    <property type="entry name" value="DNA-bd_dom_put_sf"/>
</dbReference>
<dbReference type="InterPro" id="IPR053905">
    <property type="entry name" value="EF-G-like_DII"/>
</dbReference>
<dbReference type="InterPro" id="IPR004161">
    <property type="entry name" value="EFTu-like_2"/>
</dbReference>
<dbReference type="InterPro" id="IPR013575">
    <property type="entry name" value="IF2_assoc_dom_bac"/>
</dbReference>
<dbReference type="InterPro" id="IPR044145">
    <property type="entry name" value="IF2_II"/>
</dbReference>
<dbReference type="InterPro" id="IPR006847">
    <property type="entry name" value="IF2_N"/>
</dbReference>
<dbReference type="InterPro" id="IPR027417">
    <property type="entry name" value="P-loop_NTPase"/>
</dbReference>
<dbReference type="InterPro" id="IPR005225">
    <property type="entry name" value="Small_GTP-bd"/>
</dbReference>
<dbReference type="InterPro" id="IPR000795">
    <property type="entry name" value="T_Tr_GTP-bd_dom"/>
</dbReference>
<dbReference type="InterPro" id="IPR000178">
    <property type="entry name" value="TF_IF2_bacterial-like"/>
</dbReference>
<dbReference type="InterPro" id="IPR015760">
    <property type="entry name" value="TIF_IF2"/>
</dbReference>
<dbReference type="InterPro" id="IPR023115">
    <property type="entry name" value="TIF_IF2_dom3"/>
</dbReference>
<dbReference type="InterPro" id="IPR036925">
    <property type="entry name" value="TIF_IF2_dom3_sf"/>
</dbReference>
<dbReference type="InterPro" id="IPR009000">
    <property type="entry name" value="Transl_B-barrel_sf"/>
</dbReference>
<dbReference type="NCBIfam" id="TIGR00487">
    <property type="entry name" value="IF-2"/>
    <property type="match status" value="1"/>
</dbReference>
<dbReference type="NCBIfam" id="TIGR00231">
    <property type="entry name" value="small_GTP"/>
    <property type="match status" value="1"/>
</dbReference>
<dbReference type="PANTHER" id="PTHR43381:SF5">
    <property type="entry name" value="TR-TYPE G DOMAIN-CONTAINING PROTEIN"/>
    <property type="match status" value="1"/>
</dbReference>
<dbReference type="PANTHER" id="PTHR43381">
    <property type="entry name" value="TRANSLATION INITIATION FACTOR IF-2-RELATED"/>
    <property type="match status" value="1"/>
</dbReference>
<dbReference type="Pfam" id="PF22042">
    <property type="entry name" value="EF-G_D2"/>
    <property type="match status" value="1"/>
</dbReference>
<dbReference type="Pfam" id="PF00009">
    <property type="entry name" value="GTP_EFTU"/>
    <property type="match status" value="1"/>
</dbReference>
<dbReference type="Pfam" id="PF03144">
    <property type="entry name" value="GTP_EFTU_D2"/>
    <property type="match status" value="1"/>
</dbReference>
<dbReference type="Pfam" id="PF11987">
    <property type="entry name" value="IF-2"/>
    <property type="match status" value="1"/>
</dbReference>
<dbReference type="Pfam" id="PF08364">
    <property type="entry name" value="IF2_assoc"/>
    <property type="match status" value="1"/>
</dbReference>
<dbReference type="Pfam" id="PF04760">
    <property type="entry name" value="IF2_N"/>
    <property type="match status" value="1"/>
</dbReference>
<dbReference type="SUPFAM" id="SSF52156">
    <property type="entry name" value="Initiation factor IF2/eIF5b, domain 3"/>
    <property type="match status" value="1"/>
</dbReference>
<dbReference type="SUPFAM" id="SSF52540">
    <property type="entry name" value="P-loop containing nucleoside triphosphate hydrolases"/>
    <property type="match status" value="1"/>
</dbReference>
<dbReference type="SUPFAM" id="SSF46955">
    <property type="entry name" value="Putative DNA-binding domain"/>
    <property type="match status" value="1"/>
</dbReference>
<dbReference type="SUPFAM" id="SSF50447">
    <property type="entry name" value="Translation proteins"/>
    <property type="match status" value="2"/>
</dbReference>
<dbReference type="PROSITE" id="PS51722">
    <property type="entry name" value="G_TR_2"/>
    <property type="match status" value="1"/>
</dbReference>
<dbReference type="PROSITE" id="PS01176">
    <property type="entry name" value="IF2"/>
    <property type="match status" value="1"/>
</dbReference>
<feature type="chain" id="PRO_0000137182" description="Translation initiation factor IF-2">
    <location>
        <begin position="1"/>
        <end position="876"/>
    </location>
</feature>
<feature type="domain" description="tr-type G">
    <location>
        <begin position="378"/>
        <end position="547"/>
    </location>
</feature>
<feature type="region of interest" description="G1" evidence="1">
    <location>
        <begin position="387"/>
        <end position="394"/>
    </location>
</feature>
<feature type="region of interest" description="G2" evidence="1">
    <location>
        <begin position="412"/>
        <end position="416"/>
    </location>
</feature>
<feature type="region of interest" description="G3" evidence="1">
    <location>
        <begin position="433"/>
        <end position="436"/>
    </location>
</feature>
<feature type="region of interest" description="G4" evidence="1">
    <location>
        <begin position="487"/>
        <end position="490"/>
    </location>
</feature>
<feature type="region of interest" description="G5" evidence="1">
    <location>
        <begin position="523"/>
        <end position="525"/>
    </location>
</feature>
<feature type="binding site" evidence="2">
    <location>
        <begin position="387"/>
        <end position="394"/>
    </location>
    <ligand>
        <name>GTP</name>
        <dbReference type="ChEBI" id="CHEBI:37565"/>
    </ligand>
</feature>
<feature type="binding site" evidence="2">
    <location>
        <begin position="433"/>
        <end position="437"/>
    </location>
    <ligand>
        <name>GTP</name>
        <dbReference type="ChEBI" id="CHEBI:37565"/>
    </ligand>
</feature>
<feature type="binding site" evidence="2">
    <location>
        <begin position="487"/>
        <end position="490"/>
    </location>
    <ligand>
        <name>GTP</name>
        <dbReference type="ChEBI" id="CHEBI:37565"/>
    </ligand>
</feature>
<gene>
    <name evidence="2" type="primary">infB</name>
    <name type="ordered locus">bbp_340</name>
</gene>
<reference key="1">
    <citation type="journal article" date="2003" name="Proc. Natl. Acad. Sci. U.S.A.">
        <title>Reductive genome evolution in Buchnera aphidicola.</title>
        <authorList>
            <person name="van Ham R.C.H.J."/>
            <person name="Kamerbeek J."/>
            <person name="Palacios C."/>
            <person name="Rausell C."/>
            <person name="Abascal F."/>
            <person name="Bastolla U."/>
            <person name="Fernandez J.M."/>
            <person name="Jimenez L."/>
            <person name="Postigo M."/>
            <person name="Silva F.J."/>
            <person name="Tamames J."/>
            <person name="Viguera E."/>
            <person name="Latorre A."/>
            <person name="Valencia A."/>
            <person name="Moran F."/>
            <person name="Moya A."/>
        </authorList>
    </citation>
    <scope>NUCLEOTIDE SEQUENCE [LARGE SCALE GENOMIC DNA]</scope>
    <source>
        <strain>Bp</strain>
    </source>
</reference>
<keyword id="KW-0963">Cytoplasm</keyword>
<keyword id="KW-0342">GTP-binding</keyword>
<keyword id="KW-0396">Initiation factor</keyword>
<keyword id="KW-0547">Nucleotide-binding</keyword>
<keyword id="KW-0648">Protein biosynthesis</keyword>
<keyword id="KW-1185">Reference proteome</keyword>
<sequence>MEMINIQDLANEVDMSVDRLVQVCIKIGILKTKYDTITQLEKLTILNYLNENLKNSNKNVLMLKRKIRSTVKIFSSGGKNKCISIEIRKNKRYSKSNDDIKTFLEKNKDINLNKSEIVLSAKEDSKIFVSHSKDNINSNINDTCTIRKKFNKNFKKQQKINILSEKEDKNNLDNVLNVEQGSKKKINFKNVVLEEKKENKVKFSNYIKLSEKYNTRKVSNFLTSKNIRDHNNVEKHRRNRNKILRNKHQKDNFSFEKNLSDKNIKLDNCIHKKSIKNKKESLLKQVFKKPLRAINRNIILSSAISIFNLANKMAVKSSEIIKMMARLGYTVTINQIIDQDIAQLVAEEMGHKVTICYENKLEDKIMRDRDFGDGIKKTRPPIITIMGHVDHGKTSLLDKIRLTRVADSEPGRITQHIGAYHIKINNKIITFLDTPGHSAFTAMRARGAQVTDIVILVIAIDDGIKPQTIEAIQHAQAASVPIIIAINKIDKLITNIEKIKNELTKYNILPEEWGGDNIFVNISAKSGEGIESLLNAILTQSEMLELKSISNGMASGLVIESYLDKGRGPTAIILIKEGKLNKGDIVLCGFEYGKVRSIRDDLENEVNSIGPSIPVKILGLSGIPLAGDKIVVVRDEKQAREVATYRQKKFKEQKMSKQRQLKSLDIFEDVKRSSNPSLNIVIKSDVQGSLEAISYSLLKLSNDEIKINIIGKGVGGITETDVLLAAASNAIIIGFNVRADSSAKRIIEFENVDFRYYSVIYQIIDEIKNCICGMLSPKYQQKIIGLANVRSIFKSPKIGVIAGCIVMEGIIKRNSIIQILRNNVVIHKGELISLRRFKEDVSEVRCGVECGIGMKNFNDICIEDIIEVFETIEIKQ</sequence>
<accession>Q89AF5</accession>
<organism>
    <name type="scientific">Buchnera aphidicola subsp. Baizongia pistaciae (strain Bp)</name>
    <dbReference type="NCBI Taxonomy" id="224915"/>
    <lineage>
        <taxon>Bacteria</taxon>
        <taxon>Pseudomonadati</taxon>
        <taxon>Pseudomonadota</taxon>
        <taxon>Gammaproteobacteria</taxon>
        <taxon>Enterobacterales</taxon>
        <taxon>Erwiniaceae</taxon>
        <taxon>Buchnera</taxon>
    </lineage>
</organism>
<name>IF2_BUCBP</name>
<evidence type="ECO:0000250" key="1"/>
<evidence type="ECO:0000255" key="2">
    <source>
        <dbReference type="HAMAP-Rule" id="MF_00100"/>
    </source>
</evidence>
<proteinExistence type="inferred from homology"/>
<protein>
    <recommendedName>
        <fullName evidence="2">Translation initiation factor IF-2</fullName>
    </recommendedName>
</protein>
<comment type="function">
    <text evidence="2">One of the essential components for the initiation of protein synthesis. Protects formylmethionyl-tRNA from spontaneous hydrolysis and promotes its binding to the 30S ribosomal subunits. Also involved in the hydrolysis of GTP during the formation of the 70S ribosomal complex.</text>
</comment>
<comment type="subcellular location">
    <subcellularLocation>
        <location evidence="2">Cytoplasm</location>
    </subcellularLocation>
</comment>
<comment type="similarity">
    <text evidence="2">Belongs to the TRAFAC class translation factor GTPase superfamily. Classic translation factor GTPase family. IF-2 subfamily.</text>
</comment>